<keyword id="KW-0025">Alternative splicing</keyword>
<keyword id="KW-0175">Coiled coil</keyword>
<keyword id="KW-0597">Phosphoprotein</keyword>
<keyword id="KW-1267">Proteomics identification</keyword>
<keyword id="KW-1185">Reference proteome</keyword>
<sequence length="665" mass="76219">MEPRVVKPPGQDLVVESLKSRYGLGGSCPDEYDFSNFYQSKYKRRTLTSPGDLDIYSGDKVGSSLKYSDESKHCRTPLGSLFKHVNVNCLDDELDSFHDLKKQETEEELIENDYRVSTSKITKQSFKEIEKVALPTNTTSSRPRTECCSDAGDSPLKPVSCPKSKASDKRSLLPHQISQIYDELFQIHLKLQCETAAQQKFAEELQKRERFLLEREQLLFRHENALSKIKGVEEEVLTRFQIIKEQHDAEVEHLTEVLKEKNKETKRLRSSFDALKELNDTLKKQLNEASEENRKIDIQAKRVQARLDNLQRKYEFMTIQRLKGSSHAVHEMKSLKQEKAPVSKTYKVPLNGQVYELLTVFMDWISDHHLSKVKHEESGMDGKKPQLKFASQRNDIQEKCVKLLPLMTEQLQWMPFVNIKLHEPFVKFIYWSLRQLDAGAQHSTMTSTLRRLGEDIFKGVVTKGIQDNSPQHSVENKPKTAAFFKSSNLPLRFLSTLIVLKTVTQADYLAQAFDSLCLDLKTEEGKTLFLEYQAVPVILSHLRISSKGLLSNVIDSLLQMTVESKSLQPFLEACSNSLFFRTCSVLLRAPKLDLQILEKLSIILQKLSKIKSNKKLFELFTIHLMLQEIQRTTNPEHAFLCINLNSTLFNLGLTKCNSLVSSASP</sequence>
<proteinExistence type="evidence at protein level"/>
<reference key="1">
    <citation type="journal article" date="2004" name="Nat. Genet.">
        <title>Complete sequencing and characterization of 21,243 full-length human cDNAs.</title>
        <authorList>
            <person name="Ota T."/>
            <person name="Suzuki Y."/>
            <person name="Nishikawa T."/>
            <person name="Otsuki T."/>
            <person name="Sugiyama T."/>
            <person name="Irie R."/>
            <person name="Wakamatsu A."/>
            <person name="Hayashi K."/>
            <person name="Sato H."/>
            <person name="Nagai K."/>
            <person name="Kimura K."/>
            <person name="Makita H."/>
            <person name="Sekine M."/>
            <person name="Obayashi M."/>
            <person name="Nishi T."/>
            <person name="Shibahara T."/>
            <person name="Tanaka T."/>
            <person name="Ishii S."/>
            <person name="Yamamoto J."/>
            <person name="Saito K."/>
            <person name="Kawai Y."/>
            <person name="Isono Y."/>
            <person name="Nakamura Y."/>
            <person name="Nagahari K."/>
            <person name="Murakami K."/>
            <person name="Yasuda T."/>
            <person name="Iwayanagi T."/>
            <person name="Wagatsuma M."/>
            <person name="Shiratori A."/>
            <person name="Sudo H."/>
            <person name="Hosoiri T."/>
            <person name="Kaku Y."/>
            <person name="Kodaira H."/>
            <person name="Kondo H."/>
            <person name="Sugawara M."/>
            <person name="Takahashi M."/>
            <person name="Kanda K."/>
            <person name="Yokoi T."/>
            <person name="Furuya T."/>
            <person name="Kikkawa E."/>
            <person name="Omura Y."/>
            <person name="Abe K."/>
            <person name="Kamihara K."/>
            <person name="Katsuta N."/>
            <person name="Sato K."/>
            <person name="Tanikawa M."/>
            <person name="Yamazaki M."/>
            <person name="Ninomiya K."/>
            <person name="Ishibashi T."/>
            <person name="Yamashita H."/>
            <person name="Murakawa K."/>
            <person name="Fujimori K."/>
            <person name="Tanai H."/>
            <person name="Kimata M."/>
            <person name="Watanabe M."/>
            <person name="Hiraoka S."/>
            <person name="Chiba Y."/>
            <person name="Ishida S."/>
            <person name="Ono Y."/>
            <person name="Takiguchi S."/>
            <person name="Watanabe S."/>
            <person name="Yosida M."/>
            <person name="Hotuta T."/>
            <person name="Kusano J."/>
            <person name="Kanehori K."/>
            <person name="Takahashi-Fujii A."/>
            <person name="Hara H."/>
            <person name="Tanase T.-O."/>
            <person name="Nomura Y."/>
            <person name="Togiya S."/>
            <person name="Komai F."/>
            <person name="Hara R."/>
            <person name="Takeuchi K."/>
            <person name="Arita M."/>
            <person name="Imose N."/>
            <person name="Musashino K."/>
            <person name="Yuuki H."/>
            <person name="Oshima A."/>
            <person name="Sasaki N."/>
            <person name="Aotsuka S."/>
            <person name="Yoshikawa Y."/>
            <person name="Matsunawa H."/>
            <person name="Ichihara T."/>
            <person name="Shiohata N."/>
            <person name="Sano S."/>
            <person name="Moriya S."/>
            <person name="Momiyama H."/>
            <person name="Satoh N."/>
            <person name="Takami S."/>
            <person name="Terashima Y."/>
            <person name="Suzuki O."/>
            <person name="Nakagawa S."/>
            <person name="Senoh A."/>
            <person name="Mizoguchi H."/>
            <person name="Goto Y."/>
            <person name="Shimizu F."/>
            <person name="Wakebe H."/>
            <person name="Hishigaki H."/>
            <person name="Watanabe T."/>
            <person name="Sugiyama A."/>
            <person name="Takemoto M."/>
            <person name="Kawakami B."/>
            <person name="Yamazaki M."/>
            <person name="Watanabe K."/>
            <person name="Kumagai A."/>
            <person name="Itakura S."/>
            <person name="Fukuzumi Y."/>
            <person name="Fujimori Y."/>
            <person name="Komiyama M."/>
            <person name="Tashiro H."/>
            <person name="Tanigami A."/>
            <person name="Fujiwara T."/>
            <person name="Ono T."/>
            <person name="Yamada K."/>
            <person name="Fujii Y."/>
            <person name="Ozaki K."/>
            <person name="Hirao M."/>
            <person name="Ohmori Y."/>
            <person name="Kawabata A."/>
            <person name="Hikiji T."/>
            <person name="Kobatake N."/>
            <person name="Inagaki H."/>
            <person name="Ikema Y."/>
            <person name="Okamoto S."/>
            <person name="Okitani R."/>
            <person name="Kawakami T."/>
            <person name="Noguchi S."/>
            <person name="Itoh T."/>
            <person name="Shigeta K."/>
            <person name="Senba T."/>
            <person name="Matsumura K."/>
            <person name="Nakajima Y."/>
            <person name="Mizuno T."/>
            <person name="Morinaga M."/>
            <person name="Sasaki M."/>
            <person name="Togashi T."/>
            <person name="Oyama M."/>
            <person name="Hata H."/>
            <person name="Watanabe M."/>
            <person name="Komatsu T."/>
            <person name="Mizushima-Sugano J."/>
            <person name="Satoh T."/>
            <person name="Shirai Y."/>
            <person name="Takahashi Y."/>
            <person name="Nakagawa K."/>
            <person name="Okumura K."/>
            <person name="Nagase T."/>
            <person name="Nomura N."/>
            <person name="Kikuchi H."/>
            <person name="Masuho Y."/>
            <person name="Yamashita R."/>
            <person name="Nakai K."/>
            <person name="Yada T."/>
            <person name="Nakamura Y."/>
            <person name="Ohara O."/>
            <person name="Isogai T."/>
            <person name="Sugano S."/>
        </authorList>
    </citation>
    <scope>NUCLEOTIDE SEQUENCE [LARGE SCALE MRNA] (ISOFORM 1)</scope>
    <scope>NUCLEOTIDE SEQUENCE [LARGE SCALE MRNA] OF 317-583 (ISOFORM 2)</scope>
    <source>
        <tissue>Brain</tissue>
        <tissue>Testis</tissue>
    </source>
</reference>
<reference key="2">
    <citation type="journal article" date="2005" name="Nature">
        <title>Generation and annotation of the DNA sequences of human chromosomes 2 and 4.</title>
        <authorList>
            <person name="Hillier L.W."/>
            <person name="Graves T.A."/>
            <person name="Fulton R.S."/>
            <person name="Fulton L.A."/>
            <person name="Pepin K.H."/>
            <person name="Minx P."/>
            <person name="Wagner-McPherson C."/>
            <person name="Layman D."/>
            <person name="Wylie K."/>
            <person name="Sekhon M."/>
            <person name="Becker M.C."/>
            <person name="Fewell G.A."/>
            <person name="Delehaunty K.D."/>
            <person name="Miner T.L."/>
            <person name="Nash W.E."/>
            <person name="Kremitzki C."/>
            <person name="Oddy L."/>
            <person name="Du H."/>
            <person name="Sun H."/>
            <person name="Bradshaw-Cordum H."/>
            <person name="Ali J."/>
            <person name="Carter J."/>
            <person name="Cordes M."/>
            <person name="Harris A."/>
            <person name="Isak A."/>
            <person name="van Brunt A."/>
            <person name="Nguyen C."/>
            <person name="Du F."/>
            <person name="Courtney L."/>
            <person name="Kalicki J."/>
            <person name="Ozersky P."/>
            <person name="Abbott S."/>
            <person name="Armstrong J."/>
            <person name="Belter E.A."/>
            <person name="Caruso L."/>
            <person name="Cedroni M."/>
            <person name="Cotton M."/>
            <person name="Davidson T."/>
            <person name="Desai A."/>
            <person name="Elliott G."/>
            <person name="Erb T."/>
            <person name="Fronick C."/>
            <person name="Gaige T."/>
            <person name="Haakenson W."/>
            <person name="Haglund K."/>
            <person name="Holmes A."/>
            <person name="Harkins R."/>
            <person name="Kim K."/>
            <person name="Kruchowski S.S."/>
            <person name="Strong C.M."/>
            <person name="Grewal N."/>
            <person name="Goyea E."/>
            <person name="Hou S."/>
            <person name="Levy A."/>
            <person name="Martinka S."/>
            <person name="Mead K."/>
            <person name="McLellan M.D."/>
            <person name="Meyer R."/>
            <person name="Randall-Maher J."/>
            <person name="Tomlinson C."/>
            <person name="Dauphin-Kohlberg S."/>
            <person name="Kozlowicz-Reilly A."/>
            <person name="Shah N."/>
            <person name="Swearengen-Shahid S."/>
            <person name="Snider J."/>
            <person name="Strong J.T."/>
            <person name="Thompson J."/>
            <person name="Yoakum M."/>
            <person name="Leonard S."/>
            <person name="Pearman C."/>
            <person name="Trani L."/>
            <person name="Radionenko M."/>
            <person name="Waligorski J.E."/>
            <person name="Wang C."/>
            <person name="Rock S.M."/>
            <person name="Tin-Wollam A.-M."/>
            <person name="Maupin R."/>
            <person name="Latreille P."/>
            <person name="Wendl M.C."/>
            <person name="Yang S.-P."/>
            <person name="Pohl C."/>
            <person name="Wallis J.W."/>
            <person name="Spieth J."/>
            <person name="Bieri T.A."/>
            <person name="Berkowicz N."/>
            <person name="Nelson J.O."/>
            <person name="Osborne J."/>
            <person name="Ding L."/>
            <person name="Meyer R."/>
            <person name="Sabo A."/>
            <person name="Shotland Y."/>
            <person name="Sinha P."/>
            <person name="Wohldmann P.E."/>
            <person name="Cook L.L."/>
            <person name="Hickenbotham M.T."/>
            <person name="Eldred J."/>
            <person name="Williams D."/>
            <person name="Jones T.A."/>
            <person name="She X."/>
            <person name="Ciccarelli F.D."/>
            <person name="Izaurralde E."/>
            <person name="Taylor J."/>
            <person name="Schmutz J."/>
            <person name="Myers R.M."/>
            <person name="Cox D.R."/>
            <person name="Huang X."/>
            <person name="McPherson J.D."/>
            <person name="Mardis E.R."/>
            <person name="Clifton S.W."/>
            <person name="Warren W.C."/>
            <person name="Chinwalla A.T."/>
            <person name="Eddy S.R."/>
            <person name="Marra M.A."/>
            <person name="Ovcharenko I."/>
            <person name="Furey T.S."/>
            <person name="Miller W."/>
            <person name="Eichler E.E."/>
            <person name="Bork P."/>
            <person name="Suyama M."/>
            <person name="Torrents D."/>
            <person name="Waterston R.H."/>
            <person name="Wilson R.K."/>
        </authorList>
    </citation>
    <scope>NUCLEOTIDE SEQUENCE [LARGE SCALE GENOMIC DNA]</scope>
</reference>
<reference key="3">
    <citation type="journal article" date="2004" name="Genome Res.">
        <title>The status, quality, and expansion of the NIH full-length cDNA project: the Mammalian Gene Collection (MGC).</title>
        <authorList>
            <consortium name="The MGC Project Team"/>
        </authorList>
    </citation>
    <scope>NUCLEOTIDE SEQUENCE [LARGE SCALE MRNA] (ISOFORM 2)</scope>
    <source>
        <tissue>Brain</tissue>
        <tissue>Testis</tissue>
    </source>
</reference>
<reference key="4">
    <citation type="journal article" date="2013" name="J. Proteome Res.">
        <title>Toward a comprehensive characterization of a human cancer cell phosphoproteome.</title>
        <authorList>
            <person name="Zhou H."/>
            <person name="Di Palma S."/>
            <person name="Preisinger C."/>
            <person name="Peng M."/>
            <person name="Polat A.N."/>
            <person name="Heck A.J."/>
            <person name="Mohammed S."/>
        </authorList>
    </citation>
    <scope>PHOSPHORYLATION [LARGE SCALE ANALYSIS] AT THR-48; SER-49 AND SER-469</scope>
    <scope>IDENTIFICATION BY MASS SPECTROMETRY [LARGE SCALE ANALYSIS]</scope>
    <source>
        <tissue>Cervix carcinoma</tissue>
        <tissue>Erythroleukemia</tissue>
    </source>
</reference>
<gene>
    <name type="primary">CCDC138</name>
</gene>
<accession>Q96M89</accession>
<accession>Q05DF1</accession>
<accession>Q4ZG07</accession>
<accession>Q53TE1</accession>
<accession>Q6ZUY5</accession>
<accession>Q86VL7</accession>
<protein>
    <recommendedName>
        <fullName>Coiled-coil domain-containing protein 138</fullName>
    </recommendedName>
</protein>
<comment type="interaction">
    <interactant intactId="EBI-10972887">
        <id>Q96M89-2</id>
    </interactant>
    <interactant intactId="EBI-12006120">
        <id>A0A087WZT3</id>
        <label>BOLA2-SMG1P6</label>
    </interactant>
    <organismsDiffer>false</organismsDiffer>
    <experiments>3</experiments>
</comment>
<comment type="interaction">
    <interactant intactId="EBI-10972887">
        <id>Q96M89-2</id>
    </interactant>
    <interactant intactId="EBI-295634">
        <id>Q16543</id>
        <label>CDC37</label>
    </interactant>
    <organismsDiffer>false</organismsDiffer>
    <experiments>3</experiments>
</comment>
<comment type="interaction">
    <interactant intactId="EBI-10972887">
        <id>Q96M89-2</id>
    </interactant>
    <interactant intactId="EBI-11752486">
        <id>Q86XR8-3</id>
        <label>CEP57</label>
    </interactant>
    <organismsDiffer>false</organismsDiffer>
    <experiments>3</experiments>
</comment>
<comment type="interaction">
    <interactant intactId="EBI-10972887">
        <id>Q96M89-2</id>
    </interactant>
    <interactant intactId="EBI-7225287">
        <id>Q96MY7</id>
        <label>FAM161B</label>
    </interactant>
    <organismsDiffer>false</organismsDiffer>
    <experiments>3</experiments>
</comment>
<comment type="interaction">
    <interactant intactId="EBI-10972887">
        <id>Q96M89-2</id>
    </interactant>
    <interactant intactId="EBI-3044087">
        <id>Q7Z3Y8</id>
        <label>KRT27</label>
    </interactant>
    <organismsDiffer>false</organismsDiffer>
    <experiments>3</experiments>
</comment>
<comment type="interaction">
    <interactant intactId="EBI-10972887">
        <id>Q96M89-2</id>
    </interactant>
    <interactant intactId="EBI-14066006">
        <id>Q4G0R1</id>
        <label>PIBF1</label>
    </interactant>
    <organismsDiffer>false</organismsDiffer>
    <experiments>3</experiments>
</comment>
<comment type="interaction">
    <interactant intactId="EBI-10972887">
        <id>Q96M89-2</id>
    </interactant>
    <interactant intactId="EBI-602382">
        <id>Q16512</id>
        <label>PKN1</label>
    </interactant>
    <organismsDiffer>false</organismsDiffer>
    <experiments>3</experiments>
</comment>
<comment type="interaction">
    <interactant intactId="EBI-10972887">
        <id>Q96M89-2</id>
    </interactant>
    <interactant intactId="EBI-11955057">
        <id>Q8N8B7-2</id>
        <label>TCEANC</label>
    </interactant>
    <organismsDiffer>false</organismsDiffer>
    <experiments>3</experiments>
</comment>
<comment type="interaction">
    <interactant intactId="EBI-10972887">
        <id>Q96M89-2</id>
    </interactant>
    <interactant intactId="EBI-765817">
        <id>Q9Y228</id>
        <label>TRAF3IP3</label>
    </interactant>
    <organismsDiffer>false</organismsDiffer>
    <experiments>3</experiments>
</comment>
<comment type="interaction">
    <interactant intactId="EBI-10972887">
        <id>Q96M89-2</id>
    </interactant>
    <interactant intactId="EBI-749370">
        <id>Q9BSL1</id>
        <label>UBAC1</label>
    </interactant>
    <organismsDiffer>false</organismsDiffer>
    <experiments>3</experiments>
</comment>
<comment type="alternative products">
    <event type="alternative splicing"/>
    <isoform>
        <id>Q96M89-1</id>
        <name>1</name>
        <sequence type="displayed"/>
    </isoform>
    <isoform>
        <id>Q96M89-2</id>
        <name>2</name>
        <sequence type="described" ref="VSP_025683 VSP_025684"/>
    </isoform>
</comment>
<dbReference type="EMBL" id="AK057307">
    <property type="protein sequence ID" value="BAB71420.1"/>
    <property type="molecule type" value="mRNA"/>
</dbReference>
<dbReference type="EMBL" id="AK125199">
    <property type="protein sequence ID" value="BAC86081.1"/>
    <property type="molecule type" value="mRNA"/>
</dbReference>
<dbReference type="EMBL" id="AC010095">
    <property type="protein sequence ID" value="AAY14985.1"/>
    <property type="molecule type" value="Genomic_DNA"/>
</dbReference>
<dbReference type="EMBL" id="AC073415">
    <property type="protein sequence ID" value="AAX88855.1"/>
    <property type="molecule type" value="Genomic_DNA"/>
</dbReference>
<dbReference type="EMBL" id="BC015847">
    <property type="protein sequence ID" value="AAH15847.1"/>
    <property type="status" value="ALT_TERM"/>
    <property type="molecule type" value="mRNA"/>
</dbReference>
<dbReference type="EMBL" id="BC050579">
    <property type="protein sequence ID" value="AAH50579.1"/>
    <property type="molecule type" value="mRNA"/>
</dbReference>
<dbReference type="CCDS" id="CCDS2080.1">
    <molecule id="Q96M89-1"/>
</dbReference>
<dbReference type="CCDS" id="CCDS77447.1">
    <molecule id="Q96M89-2"/>
</dbReference>
<dbReference type="RefSeq" id="NP_001290034.1">
    <molecule id="Q96M89-2"/>
    <property type="nucleotide sequence ID" value="NM_001303105.2"/>
</dbReference>
<dbReference type="RefSeq" id="NP_659415.1">
    <molecule id="Q96M89-1"/>
    <property type="nucleotide sequence ID" value="NM_144978.3"/>
</dbReference>
<dbReference type="SMR" id="Q96M89"/>
<dbReference type="BioGRID" id="127905">
    <property type="interactions" value="133"/>
</dbReference>
<dbReference type="FunCoup" id="Q96M89">
    <property type="interactions" value="1321"/>
</dbReference>
<dbReference type="IntAct" id="Q96M89">
    <property type="interactions" value="82"/>
</dbReference>
<dbReference type="MINT" id="Q96M89"/>
<dbReference type="STRING" id="9606.ENSP00000295124"/>
<dbReference type="GlyConnect" id="1123">
    <property type="glycosylation" value="3 N-Linked glycans (1 site)"/>
</dbReference>
<dbReference type="GlyCosmos" id="Q96M89">
    <property type="glycosylation" value="1 site, 3 glycans"/>
</dbReference>
<dbReference type="GlyGen" id="Q96M89">
    <property type="glycosylation" value="2 sites, 4 N-linked glycans (2 sites)"/>
</dbReference>
<dbReference type="iPTMnet" id="Q96M89"/>
<dbReference type="PhosphoSitePlus" id="Q96M89"/>
<dbReference type="BioMuta" id="CCDC138"/>
<dbReference type="DMDM" id="74732327"/>
<dbReference type="jPOST" id="Q96M89"/>
<dbReference type="MassIVE" id="Q96M89"/>
<dbReference type="PaxDb" id="9606-ENSP00000295124"/>
<dbReference type="PeptideAtlas" id="Q96M89"/>
<dbReference type="ProteomicsDB" id="77312">
    <molecule id="Q96M89-1"/>
</dbReference>
<dbReference type="ProteomicsDB" id="77313">
    <molecule id="Q96M89-2"/>
</dbReference>
<dbReference type="Pumba" id="Q96M89"/>
<dbReference type="Antibodypedia" id="33133">
    <property type="antibodies" value="68 antibodies from 14 providers"/>
</dbReference>
<dbReference type="DNASU" id="165055"/>
<dbReference type="Ensembl" id="ENST00000295124.9">
    <molecule id="Q96M89-1"/>
    <property type="protein sequence ID" value="ENSP00000295124.4"/>
    <property type="gene ID" value="ENSG00000163006.12"/>
</dbReference>
<dbReference type="Ensembl" id="ENST00000412964.6">
    <molecule id="Q96M89-2"/>
    <property type="protein sequence ID" value="ENSP00000411800.2"/>
    <property type="gene ID" value="ENSG00000163006.12"/>
</dbReference>
<dbReference type="GeneID" id="165055"/>
<dbReference type="KEGG" id="hsa:165055"/>
<dbReference type="MANE-Select" id="ENST00000295124.9">
    <property type="protein sequence ID" value="ENSP00000295124.4"/>
    <property type="RefSeq nucleotide sequence ID" value="NM_144978.3"/>
    <property type="RefSeq protein sequence ID" value="NP_659415.1"/>
</dbReference>
<dbReference type="UCSC" id="uc002ten.2">
    <molecule id="Q96M89-1"/>
    <property type="organism name" value="human"/>
</dbReference>
<dbReference type="AGR" id="HGNC:26531"/>
<dbReference type="CTD" id="165055"/>
<dbReference type="DisGeNET" id="165055"/>
<dbReference type="GeneCards" id="CCDC138"/>
<dbReference type="HGNC" id="HGNC:26531">
    <property type="gene designation" value="CCDC138"/>
</dbReference>
<dbReference type="HPA" id="ENSG00000163006">
    <property type="expression patterns" value="Tissue enhanced (testis)"/>
</dbReference>
<dbReference type="neXtProt" id="NX_Q96M89"/>
<dbReference type="OpenTargets" id="ENSG00000163006"/>
<dbReference type="PharmGKB" id="PA162381439"/>
<dbReference type="VEuPathDB" id="HostDB:ENSG00000163006"/>
<dbReference type="eggNOG" id="ENOG502QU8J">
    <property type="taxonomic scope" value="Eukaryota"/>
</dbReference>
<dbReference type="GeneTree" id="ENSGT00390000000217"/>
<dbReference type="HOGENOM" id="CLU_026862_0_0_1"/>
<dbReference type="InParanoid" id="Q96M89"/>
<dbReference type="OMA" id="EWISDHH"/>
<dbReference type="OrthoDB" id="2161164at2759"/>
<dbReference type="PAN-GO" id="Q96M89">
    <property type="GO annotations" value="0 GO annotations based on evolutionary models"/>
</dbReference>
<dbReference type="PhylomeDB" id="Q96M89"/>
<dbReference type="TreeFam" id="TF329029"/>
<dbReference type="PathwayCommons" id="Q96M89"/>
<dbReference type="SignaLink" id="Q96M89"/>
<dbReference type="BioGRID-ORCS" id="165055">
    <property type="hits" value="7 hits in 1156 CRISPR screens"/>
</dbReference>
<dbReference type="ChiTaRS" id="CCDC138">
    <property type="organism name" value="human"/>
</dbReference>
<dbReference type="GenomeRNAi" id="165055"/>
<dbReference type="Pharos" id="Q96M89">
    <property type="development level" value="Tdark"/>
</dbReference>
<dbReference type="PRO" id="PR:Q96M89"/>
<dbReference type="Proteomes" id="UP000005640">
    <property type="component" value="Chromosome 2"/>
</dbReference>
<dbReference type="RNAct" id="Q96M89">
    <property type="molecule type" value="protein"/>
</dbReference>
<dbReference type="Bgee" id="ENSG00000163006">
    <property type="expression patterns" value="Expressed in male germ line stem cell (sensu Vertebrata) in testis and 111 other cell types or tissues"/>
</dbReference>
<dbReference type="ExpressionAtlas" id="Q96M89">
    <property type="expression patterns" value="baseline and differential"/>
</dbReference>
<dbReference type="Gene3D" id="1.20.5.340">
    <property type="match status" value="1"/>
</dbReference>
<dbReference type="InterPro" id="IPR038798">
    <property type="entry name" value="CCDC138"/>
</dbReference>
<dbReference type="InterPro" id="IPR048750">
    <property type="entry name" value="CCDC138_C"/>
</dbReference>
<dbReference type="InterPro" id="IPR048751">
    <property type="entry name" value="CCDC138_cc"/>
</dbReference>
<dbReference type="PANTHER" id="PTHR34523">
    <property type="entry name" value="COILED-COIL DOMAIN-CONTAINING PROTEIN 138"/>
    <property type="match status" value="1"/>
</dbReference>
<dbReference type="PANTHER" id="PTHR34523:SF1">
    <property type="entry name" value="COILED-COIL DOMAIN-CONTAINING PROTEIN 138"/>
    <property type="match status" value="1"/>
</dbReference>
<dbReference type="Pfam" id="PF21035">
    <property type="entry name" value="CCDC138_C"/>
    <property type="match status" value="1"/>
</dbReference>
<dbReference type="Pfam" id="PF21037">
    <property type="entry name" value="CCDC138_cc"/>
    <property type="match status" value="1"/>
</dbReference>
<feature type="chain" id="PRO_0000288454" description="Coiled-coil domain-containing protein 138">
    <location>
        <begin position="1"/>
        <end position="665"/>
    </location>
</feature>
<feature type="coiled-coil region" evidence="1">
    <location>
        <begin position="198"/>
        <end position="323"/>
    </location>
</feature>
<feature type="modified residue" description="Phosphothreonine" evidence="4">
    <location>
        <position position="48"/>
    </location>
</feature>
<feature type="modified residue" description="Phosphoserine" evidence="4">
    <location>
        <position position="49"/>
    </location>
</feature>
<feature type="modified residue" description="Phosphoserine" evidence="4">
    <location>
        <position position="469"/>
    </location>
</feature>
<feature type="splice variant" id="VSP_025683" description="In isoform 2." evidence="2 3">
    <original>KSLQPFLEACSNS</original>
    <variation>RVIRSSLNFLRFI</variation>
    <location>
        <begin position="565"/>
        <end position="577"/>
    </location>
</feature>
<feature type="splice variant" id="VSP_025684" description="In isoform 2." evidence="2 3">
    <location>
        <begin position="578"/>
        <end position="665"/>
    </location>
</feature>
<feature type="sequence variant" id="VAR_032420" description="In dbSNP:rs35794776.">
    <original>D</original>
    <variation>Y</variation>
    <location>
        <position position="99"/>
    </location>
</feature>
<feature type="sequence variant" id="VAR_032421" description="In dbSNP:rs6740879.">
    <original>R</original>
    <variation>K</variation>
    <location>
        <position position="115"/>
    </location>
</feature>
<evidence type="ECO:0000255" key="1"/>
<evidence type="ECO:0000303" key="2">
    <source>
    </source>
</evidence>
<evidence type="ECO:0000303" key="3">
    <source>
    </source>
</evidence>
<evidence type="ECO:0007744" key="4">
    <source>
    </source>
</evidence>
<organism>
    <name type="scientific">Homo sapiens</name>
    <name type="common">Human</name>
    <dbReference type="NCBI Taxonomy" id="9606"/>
    <lineage>
        <taxon>Eukaryota</taxon>
        <taxon>Metazoa</taxon>
        <taxon>Chordata</taxon>
        <taxon>Craniata</taxon>
        <taxon>Vertebrata</taxon>
        <taxon>Euteleostomi</taxon>
        <taxon>Mammalia</taxon>
        <taxon>Eutheria</taxon>
        <taxon>Euarchontoglires</taxon>
        <taxon>Primates</taxon>
        <taxon>Haplorrhini</taxon>
        <taxon>Catarrhini</taxon>
        <taxon>Hominidae</taxon>
        <taxon>Homo</taxon>
    </lineage>
</organism>
<name>CC138_HUMAN</name>